<evidence type="ECO:0000250" key="1">
    <source>
        <dbReference type="UniProtKB" id="Q9FKT1"/>
    </source>
</evidence>
<evidence type="ECO:0000255" key="2"/>
<evidence type="ECO:0000255" key="3">
    <source>
        <dbReference type="PROSITE-ProRule" id="PRU00498"/>
    </source>
</evidence>
<evidence type="ECO:0000269" key="4">
    <source>
    </source>
</evidence>
<evidence type="ECO:0000303" key="5">
    <source>
    </source>
</evidence>
<evidence type="ECO:0000305" key="6"/>
<evidence type="ECO:0000312" key="7">
    <source>
        <dbReference type="Araport" id="AT4G28280"/>
    </source>
</evidence>
<reference key="1">
    <citation type="journal article" date="1999" name="Nature">
        <title>Sequence and analysis of chromosome 4 of the plant Arabidopsis thaliana.</title>
        <authorList>
            <person name="Mayer K.F.X."/>
            <person name="Schueller C."/>
            <person name="Wambutt R."/>
            <person name="Murphy G."/>
            <person name="Volckaert G."/>
            <person name="Pohl T."/>
            <person name="Duesterhoeft A."/>
            <person name="Stiekema W."/>
            <person name="Entian K.-D."/>
            <person name="Terryn N."/>
            <person name="Harris B."/>
            <person name="Ansorge W."/>
            <person name="Brandt P."/>
            <person name="Grivell L.A."/>
            <person name="Rieger M."/>
            <person name="Weichselgartner M."/>
            <person name="de Simone V."/>
            <person name="Obermaier B."/>
            <person name="Mache R."/>
            <person name="Mueller M."/>
            <person name="Kreis M."/>
            <person name="Delseny M."/>
            <person name="Puigdomenech P."/>
            <person name="Watson M."/>
            <person name="Schmidtheini T."/>
            <person name="Reichert B."/>
            <person name="Portetelle D."/>
            <person name="Perez-Alonso M."/>
            <person name="Boutry M."/>
            <person name="Bancroft I."/>
            <person name="Vos P."/>
            <person name="Hoheisel J."/>
            <person name="Zimmermann W."/>
            <person name="Wedler H."/>
            <person name="Ridley P."/>
            <person name="Langham S.-A."/>
            <person name="McCullagh B."/>
            <person name="Bilham L."/>
            <person name="Robben J."/>
            <person name="van der Schueren J."/>
            <person name="Grymonprez B."/>
            <person name="Chuang Y.-J."/>
            <person name="Vandenbussche F."/>
            <person name="Braeken M."/>
            <person name="Weltjens I."/>
            <person name="Voet M."/>
            <person name="Bastiaens I."/>
            <person name="Aert R."/>
            <person name="Defoor E."/>
            <person name="Weitzenegger T."/>
            <person name="Bothe G."/>
            <person name="Ramsperger U."/>
            <person name="Hilbert H."/>
            <person name="Braun M."/>
            <person name="Holzer E."/>
            <person name="Brandt A."/>
            <person name="Peters S."/>
            <person name="van Staveren M."/>
            <person name="Dirkse W."/>
            <person name="Mooijman P."/>
            <person name="Klein Lankhorst R."/>
            <person name="Rose M."/>
            <person name="Hauf J."/>
            <person name="Koetter P."/>
            <person name="Berneiser S."/>
            <person name="Hempel S."/>
            <person name="Feldpausch M."/>
            <person name="Lamberth S."/>
            <person name="Van den Daele H."/>
            <person name="De Keyser A."/>
            <person name="Buysshaert C."/>
            <person name="Gielen J."/>
            <person name="Villarroel R."/>
            <person name="De Clercq R."/>
            <person name="van Montagu M."/>
            <person name="Rogers J."/>
            <person name="Cronin A."/>
            <person name="Quail M.A."/>
            <person name="Bray-Allen S."/>
            <person name="Clark L."/>
            <person name="Doggett J."/>
            <person name="Hall S."/>
            <person name="Kay M."/>
            <person name="Lennard N."/>
            <person name="McLay K."/>
            <person name="Mayes R."/>
            <person name="Pettett A."/>
            <person name="Rajandream M.A."/>
            <person name="Lyne M."/>
            <person name="Benes V."/>
            <person name="Rechmann S."/>
            <person name="Borkova D."/>
            <person name="Bloecker H."/>
            <person name="Scharfe M."/>
            <person name="Grimm M."/>
            <person name="Loehnert T.-H."/>
            <person name="Dose S."/>
            <person name="de Haan M."/>
            <person name="Maarse A.C."/>
            <person name="Schaefer M."/>
            <person name="Mueller-Auer S."/>
            <person name="Gabel C."/>
            <person name="Fuchs M."/>
            <person name="Fartmann B."/>
            <person name="Granderath K."/>
            <person name="Dauner D."/>
            <person name="Herzl A."/>
            <person name="Neumann S."/>
            <person name="Argiriou A."/>
            <person name="Vitale D."/>
            <person name="Liguori R."/>
            <person name="Piravandi E."/>
            <person name="Massenet O."/>
            <person name="Quigley F."/>
            <person name="Clabauld G."/>
            <person name="Muendlein A."/>
            <person name="Felber R."/>
            <person name="Schnabl S."/>
            <person name="Hiller R."/>
            <person name="Schmidt W."/>
            <person name="Lecharny A."/>
            <person name="Aubourg S."/>
            <person name="Chefdor F."/>
            <person name="Cooke R."/>
            <person name="Berger C."/>
            <person name="Monfort A."/>
            <person name="Casacuberta E."/>
            <person name="Gibbons T."/>
            <person name="Weber N."/>
            <person name="Vandenbol M."/>
            <person name="Bargues M."/>
            <person name="Terol J."/>
            <person name="Torres A."/>
            <person name="Perez-Perez A."/>
            <person name="Purnelle B."/>
            <person name="Bent E."/>
            <person name="Johnson S."/>
            <person name="Tacon D."/>
            <person name="Jesse T."/>
            <person name="Heijnen L."/>
            <person name="Schwarz S."/>
            <person name="Scholler P."/>
            <person name="Heber S."/>
            <person name="Francs P."/>
            <person name="Bielke C."/>
            <person name="Frishman D."/>
            <person name="Haase D."/>
            <person name="Lemcke K."/>
            <person name="Mewes H.-W."/>
            <person name="Stocker S."/>
            <person name="Zaccaria P."/>
            <person name="Bevan M."/>
            <person name="Wilson R.K."/>
            <person name="de la Bastide M."/>
            <person name="Habermann K."/>
            <person name="Parnell L."/>
            <person name="Dedhia N."/>
            <person name="Gnoj L."/>
            <person name="Schutz K."/>
            <person name="Huang E."/>
            <person name="Spiegel L."/>
            <person name="Sekhon M."/>
            <person name="Murray J."/>
            <person name="Sheet P."/>
            <person name="Cordes M."/>
            <person name="Abu-Threideh J."/>
            <person name="Stoneking T."/>
            <person name="Kalicki J."/>
            <person name="Graves T."/>
            <person name="Harmon G."/>
            <person name="Edwards J."/>
            <person name="Latreille P."/>
            <person name="Courtney L."/>
            <person name="Cloud J."/>
            <person name="Abbott A."/>
            <person name="Scott K."/>
            <person name="Johnson D."/>
            <person name="Minx P."/>
            <person name="Bentley D."/>
            <person name="Fulton B."/>
            <person name="Miller N."/>
            <person name="Greco T."/>
            <person name="Kemp K."/>
            <person name="Kramer J."/>
            <person name="Fulton L."/>
            <person name="Mardis E."/>
            <person name="Dante M."/>
            <person name="Pepin K."/>
            <person name="Hillier L.W."/>
            <person name="Nelson J."/>
            <person name="Spieth J."/>
            <person name="Ryan E."/>
            <person name="Andrews S."/>
            <person name="Geisel C."/>
            <person name="Layman D."/>
            <person name="Du H."/>
            <person name="Ali J."/>
            <person name="Berghoff A."/>
            <person name="Jones K."/>
            <person name="Drone K."/>
            <person name="Cotton M."/>
            <person name="Joshu C."/>
            <person name="Antonoiu B."/>
            <person name="Zidanic M."/>
            <person name="Strong C."/>
            <person name="Sun H."/>
            <person name="Lamar B."/>
            <person name="Yordan C."/>
            <person name="Ma P."/>
            <person name="Zhong J."/>
            <person name="Preston R."/>
            <person name="Vil D."/>
            <person name="Shekher M."/>
            <person name="Matero A."/>
            <person name="Shah R."/>
            <person name="Swaby I.K."/>
            <person name="O'Shaughnessy A."/>
            <person name="Rodriguez M."/>
            <person name="Hoffman J."/>
            <person name="Till S."/>
            <person name="Granat S."/>
            <person name="Shohdy N."/>
            <person name="Hasegawa A."/>
            <person name="Hameed A."/>
            <person name="Lodhi M."/>
            <person name="Johnson A."/>
            <person name="Chen E."/>
            <person name="Marra M.A."/>
            <person name="Martienssen R."/>
            <person name="McCombie W.R."/>
        </authorList>
    </citation>
    <scope>NUCLEOTIDE SEQUENCE [LARGE SCALE GENOMIC DNA]</scope>
    <source>
        <strain>cv. Columbia</strain>
    </source>
</reference>
<reference key="2">
    <citation type="journal article" date="2017" name="Plant J.">
        <title>Araport11: a complete reannotation of the Arabidopsis thaliana reference genome.</title>
        <authorList>
            <person name="Cheng C.Y."/>
            <person name="Krishnakumar V."/>
            <person name="Chan A.P."/>
            <person name="Thibaud-Nissen F."/>
            <person name="Schobel S."/>
            <person name="Town C.D."/>
        </authorList>
    </citation>
    <scope>GENOME REANNOTATION</scope>
    <source>
        <strain>cv. Columbia</strain>
    </source>
</reference>
<reference key="3">
    <citation type="submission" date="2004-02" db="EMBL/GenBank/DDBJ databases">
        <title>Arabidopsis ORF clones.</title>
        <authorList>
            <person name="Kim C.J."/>
            <person name="Chen H."/>
            <person name="Cheuk R.F."/>
            <person name="Shinn P."/>
            <person name="Ecker J.R."/>
        </authorList>
    </citation>
    <scope>NUCLEOTIDE SEQUENCE [LARGE SCALE MRNA] (ISOFORM 2)</scope>
    <source>
        <strain>cv. Columbia</strain>
    </source>
</reference>
<reference key="4">
    <citation type="journal article" date="2010" name="Plant J.">
        <title>A role for LORELEI, a putative glycosylphosphatidylinositol-anchored protein, in Arabidopsis thaliana double fertilization and early seed development.</title>
        <authorList>
            <person name="Tsukamoto T."/>
            <person name="Qin Y."/>
            <person name="Huang Y."/>
            <person name="Dunatunga D."/>
            <person name="Palanivelu R."/>
        </authorList>
    </citation>
    <scope>TISSUE SPECIFICITY</scope>
    <scope>DISRUPTION PHENOTYPE</scope>
</reference>
<organism>
    <name type="scientific">Arabidopsis thaliana</name>
    <name type="common">Mouse-ear cress</name>
    <dbReference type="NCBI Taxonomy" id="3702"/>
    <lineage>
        <taxon>Eukaryota</taxon>
        <taxon>Viridiplantae</taxon>
        <taxon>Streptophyta</taxon>
        <taxon>Embryophyta</taxon>
        <taxon>Tracheophyta</taxon>
        <taxon>Spermatophyta</taxon>
        <taxon>Magnoliopsida</taxon>
        <taxon>eudicotyledons</taxon>
        <taxon>Gunneridae</taxon>
        <taxon>Pentapetalae</taxon>
        <taxon>rosids</taxon>
        <taxon>malvids</taxon>
        <taxon>Brassicales</taxon>
        <taxon>Brassicaceae</taxon>
        <taxon>Camelineae</taxon>
        <taxon>Arabidopsis</taxon>
    </lineage>
</organism>
<protein>
    <recommendedName>
        <fullName evidence="6">GPI-anchored protein LLG3</fullName>
    </recommendedName>
    <alternativeName>
        <fullName evidence="5">LORELEI-like-GPI-anchored protein 3</fullName>
    </alternativeName>
</protein>
<keyword id="KW-0025">Alternative splicing</keyword>
<keyword id="KW-1003">Cell membrane</keyword>
<keyword id="KW-0325">Glycoprotein</keyword>
<keyword id="KW-0336">GPI-anchor</keyword>
<keyword id="KW-0449">Lipoprotein</keyword>
<keyword id="KW-0472">Membrane</keyword>
<keyword id="KW-1185">Reference proteome</keyword>
<keyword id="KW-0732">Signal</keyword>
<name>LLG3_ARATH</name>
<comment type="subcellular location">
    <subcellularLocation>
        <location evidence="1">Cell membrane</location>
        <topology evidence="2">Lipid-anchor</topology>
        <topology evidence="2">GPI-anchor</topology>
    </subcellularLocation>
</comment>
<comment type="alternative products">
    <event type="alternative splicing"/>
    <isoform>
        <id>Q9M0I0-1</id>
        <name>1</name>
        <sequence type="displayed"/>
    </isoform>
    <isoform>
        <id>Q9M0I0-2</id>
        <name>2</name>
        <sequence type="described" ref="VSP_058609"/>
    </isoform>
</comment>
<comment type="tissue specificity">
    <text evidence="4">Expressed in pollen, pollen tubes, sporophytic pistil tissues, in the early stages of female gametophyte development, and in unfertilized, mature ovules.</text>
</comment>
<comment type="disruption phenotype">
    <text evidence="4">No aborted seed phenotype and normal production of seed sets.</text>
</comment>
<sequence>MKITHHCLVSLLSILLLSGFAFSHHISLDEFESHPSTSRALLQAKATCKEDFAAKNYTIITSKCKGPNYPAKVCCSAFKDFACPFAEVLNDEKTDCASTMFSYINLYGRYPPGIFANMCKEGKEGLDCTDVTPTSSSHASIPLVSTHVLLITVSILFHLF</sequence>
<gene>
    <name evidence="5" type="primary">LLG3</name>
    <name evidence="7" type="ordered locus">At4g28280</name>
</gene>
<proteinExistence type="evidence at transcript level"/>
<accession>Q9M0I0</accession>
<accession>Q6NMM2</accession>
<dbReference type="EMBL" id="AL161572">
    <property type="protein sequence ID" value="CAB79630.1"/>
    <property type="molecule type" value="Genomic_DNA"/>
</dbReference>
<dbReference type="EMBL" id="CP002687">
    <property type="protein sequence ID" value="AEE85463.1"/>
    <property type="molecule type" value="Genomic_DNA"/>
</dbReference>
<dbReference type="EMBL" id="CP002687">
    <property type="protein sequence ID" value="AEE85464.1"/>
    <property type="molecule type" value="Genomic_DNA"/>
</dbReference>
<dbReference type="EMBL" id="BT010922">
    <property type="protein sequence ID" value="AAR24700.1"/>
    <property type="molecule type" value="mRNA"/>
</dbReference>
<dbReference type="EMBL" id="BT011635">
    <property type="protein sequence ID" value="AAS47641.1"/>
    <property type="molecule type" value="mRNA"/>
</dbReference>
<dbReference type="PIR" id="T09044">
    <property type="entry name" value="T09044"/>
</dbReference>
<dbReference type="RefSeq" id="NP_001190858.1">
    <molecule id="Q9M0I0-1"/>
    <property type="nucleotide sequence ID" value="NM_001203929.2"/>
</dbReference>
<dbReference type="RefSeq" id="NP_194557.2">
    <molecule id="Q9M0I0-2"/>
    <property type="nucleotide sequence ID" value="NM_118968.2"/>
</dbReference>
<dbReference type="SMR" id="Q9M0I0"/>
<dbReference type="STRING" id="3702.Q9M0I0"/>
<dbReference type="GlyCosmos" id="Q9M0I0">
    <property type="glycosylation" value="1 site, No reported glycans"/>
</dbReference>
<dbReference type="GlyGen" id="Q9M0I0">
    <property type="glycosylation" value="2 sites"/>
</dbReference>
<dbReference type="PaxDb" id="3702-AT4G28280.2"/>
<dbReference type="ProteomicsDB" id="238461">
    <molecule id="Q9M0I0-1"/>
</dbReference>
<dbReference type="EnsemblPlants" id="AT4G28280.1">
    <molecule id="Q9M0I0-2"/>
    <property type="protein sequence ID" value="AT4G28280.1"/>
    <property type="gene ID" value="AT4G28280"/>
</dbReference>
<dbReference type="EnsemblPlants" id="AT4G28280.2">
    <molecule id="Q9M0I0-1"/>
    <property type="protein sequence ID" value="AT4G28280.2"/>
    <property type="gene ID" value="AT4G28280"/>
</dbReference>
<dbReference type="GeneID" id="828943"/>
<dbReference type="Gramene" id="AT4G28280.1">
    <molecule id="Q9M0I0-2"/>
    <property type="protein sequence ID" value="AT4G28280.1"/>
    <property type="gene ID" value="AT4G28280"/>
</dbReference>
<dbReference type="Gramene" id="AT4G28280.2">
    <molecule id="Q9M0I0-1"/>
    <property type="protein sequence ID" value="AT4G28280.2"/>
    <property type="gene ID" value="AT4G28280"/>
</dbReference>
<dbReference type="KEGG" id="ath:AT4G28280"/>
<dbReference type="Araport" id="AT4G28280"/>
<dbReference type="TAIR" id="AT4G28280">
    <property type="gene designation" value="LLG3"/>
</dbReference>
<dbReference type="eggNOG" id="ENOG502S17V">
    <property type="taxonomic scope" value="Eukaryota"/>
</dbReference>
<dbReference type="HOGENOM" id="CLU_119747_0_0_1"/>
<dbReference type="InParanoid" id="Q9M0I0"/>
<dbReference type="OMA" id="ACCTAFK"/>
<dbReference type="OrthoDB" id="585255at2759"/>
<dbReference type="PRO" id="PR:Q9M0I0"/>
<dbReference type="Proteomes" id="UP000006548">
    <property type="component" value="Chromosome 4"/>
</dbReference>
<dbReference type="ExpressionAtlas" id="Q9M0I0">
    <property type="expression patterns" value="baseline and differential"/>
</dbReference>
<dbReference type="GO" id="GO:0005886">
    <property type="term" value="C:plasma membrane"/>
    <property type="evidence" value="ECO:0000314"/>
    <property type="project" value="TAIR"/>
</dbReference>
<dbReference type="GO" id="GO:0090406">
    <property type="term" value="C:pollen tube"/>
    <property type="evidence" value="ECO:0000314"/>
    <property type="project" value="TAIR"/>
</dbReference>
<dbReference type="GO" id="GO:0098552">
    <property type="term" value="C:side of membrane"/>
    <property type="evidence" value="ECO:0007669"/>
    <property type="project" value="UniProtKB-KW"/>
</dbReference>
<dbReference type="GO" id="GO:1903428">
    <property type="term" value="P:positive regulation of reactive oxygen species biosynthetic process"/>
    <property type="evidence" value="ECO:0000316"/>
    <property type="project" value="TAIR"/>
</dbReference>
<dbReference type="GO" id="GO:0072659">
    <property type="term" value="P:protein localization to plasma membrane"/>
    <property type="evidence" value="ECO:0000316"/>
    <property type="project" value="TAIR"/>
</dbReference>
<dbReference type="GO" id="GO:0080092">
    <property type="term" value="P:regulation of pollen tube growth"/>
    <property type="evidence" value="ECO:0000316"/>
    <property type="project" value="TAIR"/>
</dbReference>
<dbReference type="InterPro" id="IPR039307">
    <property type="entry name" value="LORELEI-like"/>
</dbReference>
<dbReference type="PANTHER" id="PTHR31533">
    <property type="entry name" value="GPI-ANCHORED PROTEIN LLG1-RELATED-RELATED"/>
    <property type="match status" value="1"/>
</dbReference>
<dbReference type="PANTHER" id="PTHR31533:SF35">
    <property type="entry name" value="GPI-ANCHORED PROTEIN LLG2-RELATED"/>
    <property type="match status" value="1"/>
</dbReference>
<feature type="signal peptide" evidence="2">
    <location>
        <begin position="1"/>
        <end position="23"/>
    </location>
</feature>
<feature type="chain" id="PRO_5008180242" description="GPI-anchored protein LLG3" evidence="2">
    <location>
        <begin position="24"/>
        <end position="137"/>
    </location>
</feature>
<feature type="propeptide" id="PRO_0000438102" description="Removed in mature form" evidence="2">
    <location>
        <begin position="138"/>
        <end position="160"/>
    </location>
</feature>
<feature type="lipid moiety-binding region" description="GPI-anchor amidated serine" evidence="2">
    <location>
        <position position="137"/>
    </location>
</feature>
<feature type="glycosylation site" description="N-linked (GlcNAc...) asparagine" evidence="3">
    <location>
        <position position="56"/>
    </location>
</feature>
<feature type="splice variant" id="VSP_058609" description="In isoform 2.">
    <original>MKITHHCLVSLLSILLLSGFAFSHHISLDEFESHPSTSRALLQAKAT</original>
    <variation>MIISLISKIFHDHYVNDILTA</variation>
    <location>
        <begin position="1"/>
        <end position="47"/>
    </location>
</feature>